<dbReference type="EC" id="3.5.3.23" evidence="1"/>
<dbReference type="EMBL" id="CP000681">
    <property type="protein sequence ID" value="ABP75972.1"/>
    <property type="molecule type" value="Genomic_DNA"/>
</dbReference>
<dbReference type="SMR" id="A4Y7N9"/>
<dbReference type="STRING" id="319224.Sputcn32_2251"/>
<dbReference type="KEGG" id="spc:Sputcn32_2251"/>
<dbReference type="eggNOG" id="COG3724">
    <property type="taxonomic scope" value="Bacteria"/>
</dbReference>
<dbReference type="HOGENOM" id="CLU_053835_0_0_6"/>
<dbReference type="UniPathway" id="UPA00185">
    <property type="reaction ID" value="UER00280"/>
</dbReference>
<dbReference type="GO" id="GO:0009015">
    <property type="term" value="F:N-succinylarginine dihydrolase activity"/>
    <property type="evidence" value="ECO:0007669"/>
    <property type="project" value="UniProtKB-UniRule"/>
</dbReference>
<dbReference type="GO" id="GO:0019544">
    <property type="term" value="P:arginine catabolic process to glutamate"/>
    <property type="evidence" value="ECO:0007669"/>
    <property type="project" value="UniProtKB-UniRule"/>
</dbReference>
<dbReference type="GO" id="GO:0019545">
    <property type="term" value="P:arginine catabolic process to succinate"/>
    <property type="evidence" value="ECO:0007669"/>
    <property type="project" value="UniProtKB-UniRule"/>
</dbReference>
<dbReference type="FunFam" id="3.75.10.20:FF:000001">
    <property type="entry name" value="N-succinylarginine dihydrolase"/>
    <property type="match status" value="1"/>
</dbReference>
<dbReference type="Gene3D" id="3.75.10.20">
    <property type="entry name" value="Succinylarginine dihydrolase"/>
    <property type="match status" value="1"/>
</dbReference>
<dbReference type="HAMAP" id="MF_01172">
    <property type="entry name" value="AstB"/>
    <property type="match status" value="1"/>
</dbReference>
<dbReference type="InterPro" id="IPR037031">
    <property type="entry name" value="AstB_sf"/>
</dbReference>
<dbReference type="InterPro" id="IPR007079">
    <property type="entry name" value="SuccinylArg_d-Hdrlase_AstB"/>
</dbReference>
<dbReference type="NCBIfam" id="TIGR03241">
    <property type="entry name" value="arg_catab_astB"/>
    <property type="match status" value="1"/>
</dbReference>
<dbReference type="NCBIfam" id="NF009789">
    <property type="entry name" value="PRK13281.1"/>
    <property type="match status" value="1"/>
</dbReference>
<dbReference type="PANTHER" id="PTHR30420">
    <property type="entry name" value="N-SUCCINYLARGININE DIHYDROLASE"/>
    <property type="match status" value="1"/>
</dbReference>
<dbReference type="PANTHER" id="PTHR30420:SF2">
    <property type="entry name" value="N-SUCCINYLARGININE DIHYDROLASE"/>
    <property type="match status" value="1"/>
</dbReference>
<dbReference type="Pfam" id="PF04996">
    <property type="entry name" value="AstB"/>
    <property type="match status" value="1"/>
</dbReference>
<dbReference type="SUPFAM" id="SSF55909">
    <property type="entry name" value="Pentein"/>
    <property type="match status" value="1"/>
</dbReference>
<keyword id="KW-0056">Arginine metabolism</keyword>
<keyword id="KW-0378">Hydrolase</keyword>
<sequence>MKHFEANFDGLVGPTHNYAGLSFGNVASLSNAALVSNPKAAAKQGLQKAKALADMGIVQGMLAPQERPDLYTLRRIGFSGSDANVLKQAAKEAPILLNACCSASSMWTANAATVSPSADTRDGKLHFTPANLVDKLHRSIEPLTTGRILTATFNDPHYFHHHSHLPEHNSFGDEGAANHTRLCKEYGHAGVELFVYGQEATNPNAPKPQKYPARQTLEASMAVARLHQLEDDNCVFIQQNPDVIDQGVFHNDVIAVGNQNVLFYHEQAFLNTQQKIDEIKRKLDTELYFIEVPTAKVTIQDAVKSYLFNTQIITLASGEMAIIAPTDCQENPAVLAYLNELLTLNTPIKQVLYFDVKQSMQNGGGPACLRLRVAMNEKEITAVNQHTLLNDALFNRLNTWIEKHYRDRLTTQDLADPQLIIESRTALDELSQIMKLGSVYQFQK</sequence>
<name>ASTB_SHEPC</name>
<gene>
    <name evidence="1" type="primary">astB</name>
    <name type="ordered locus">Sputcn32_2251</name>
</gene>
<accession>A4Y7N9</accession>
<proteinExistence type="inferred from homology"/>
<reference key="1">
    <citation type="submission" date="2007-04" db="EMBL/GenBank/DDBJ databases">
        <title>Complete sequence of Shewanella putrefaciens CN-32.</title>
        <authorList>
            <consortium name="US DOE Joint Genome Institute"/>
            <person name="Copeland A."/>
            <person name="Lucas S."/>
            <person name="Lapidus A."/>
            <person name="Barry K."/>
            <person name="Detter J.C."/>
            <person name="Glavina del Rio T."/>
            <person name="Hammon N."/>
            <person name="Israni S."/>
            <person name="Dalin E."/>
            <person name="Tice H."/>
            <person name="Pitluck S."/>
            <person name="Chain P."/>
            <person name="Malfatti S."/>
            <person name="Shin M."/>
            <person name="Vergez L."/>
            <person name="Schmutz J."/>
            <person name="Larimer F."/>
            <person name="Land M."/>
            <person name="Hauser L."/>
            <person name="Kyrpides N."/>
            <person name="Mikhailova N."/>
            <person name="Romine M.F."/>
            <person name="Fredrickson J."/>
            <person name="Tiedje J."/>
            <person name="Richardson P."/>
        </authorList>
    </citation>
    <scope>NUCLEOTIDE SEQUENCE [LARGE SCALE GENOMIC DNA]</scope>
    <source>
        <strain>CN-32 / ATCC BAA-453</strain>
    </source>
</reference>
<protein>
    <recommendedName>
        <fullName evidence="1">N-succinylarginine dihydrolase</fullName>
        <ecNumber evidence="1">3.5.3.23</ecNumber>
    </recommendedName>
</protein>
<feature type="chain" id="PRO_1000065739" description="N-succinylarginine dihydrolase">
    <location>
        <begin position="1"/>
        <end position="444"/>
    </location>
</feature>
<feature type="active site" evidence="1">
    <location>
        <position position="174"/>
    </location>
</feature>
<feature type="active site" evidence="1">
    <location>
        <position position="250"/>
    </location>
</feature>
<feature type="active site" description="Nucleophile" evidence="1">
    <location>
        <position position="368"/>
    </location>
</feature>
<feature type="binding site" evidence="1">
    <location>
        <begin position="19"/>
        <end position="28"/>
    </location>
    <ligand>
        <name>substrate</name>
    </ligand>
</feature>
<feature type="binding site" evidence="1">
    <location>
        <position position="110"/>
    </location>
    <ligand>
        <name>substrate</name>
    </ligand>
</feature>
<feature type="binding site" evidence="1">
    <location>
        <begin position="137"/>
        <end position="138"/>
    </location>
    <ligand>
        <name>substrate</name>
    </ligand>
</feature>
<feature type="binding site" evidence="1">
    <location>
        <position position="214"/>
    </location>
    <ligand>
        <name>substrate</name>
    </ligand>
</feature>
<feature type="binding site" evidence="1">
    <location>
        <position position="252"/>
    </location>
    <ligand>
        <name>substrate</name>
    </ligand>
</feature>
<feature type="binding site" evidence="1">
    <location>
        <position position="362"/>
    </location>
    <ligand>
        <name>substrate</name>
    </ligand>
</feature>
<comment type="function">
    <text evidence="1">Catalyzes the hydrolysis of N(2)-succinylarginine into N(2)-succinylornithine, ammonia and CO(2).</text>
</comment>
<comment type="catalytic activity">
    <reaction evidence="1">
        <text>N(2)-succinyl-L-arginine + 2 H2O + 2 H(+) = N(2)-succinyl-L-ornithine + 2 NH4(+) + CO2</text>
        <dbReference type="Rhea" id="RHEA:19533"/>
        <dbReference type="ChEBI" id="CHEBI:15377"/>
        <dbReference type="ChEBI" id="CHEBI:15378"/>
        <dbReference type="ChEBI" id="CHEBI:16526"/>
        <dbReference type="ChEBI" id="CHEBI:28938"/>
        <dbReference type="ChEBI" id="CHEBI:58241"/>
        <dbReference type="ChEBI" id="CHEBI:58514"/>
        <dbReference type="EC" id="3.5.3.23"/>
    </reaction>
</comment>
<comment type="pathway">
    <text evidence="1">Amino-acid degradation; L-arginine degradation via AST pathway; L-glutamate and succinate from L-arginine: step 2/5.</text>
</comment>
<comment type="subunit">
    <text evidence="1">Homodimer.</text>
</comment>
<comment type="similarity">
    <text evidence="1">Belongs to the succinylarginine dihydrolase family.</text>
</comment>
<organism>
    <name type="scientific">Shewanella putrefaciens (strain CN-32 / ATCC BAA-453)</name>
    <dbReference type="NCBI Taxonomy" id="319224"/>
    <lineage>
        <taxon>Bacteria</taxon>
        <taxon>Pseudomonadati</taxon>
        <taxon>Pseudomonadota</taxon>
        <taxon>Gammaproteobacteria</taxon>
        <taxon>Alteromonadales</taxon>
        <taxon>Shewanellaceae</taxon>
        <taxon>Shewanella</taxon>
    </lineage>
</organism>
<evidence type="ECO:0000255" key="1">
    <source>
        <dbReference type="HAMAP-Rule" id="MF_01172"/>
    </source>
</evidence>